<sequence length="857" mass="95930">MSNSSARPESLGEYLAHLPLSDEQRAELASCTSFSELHQRLAGNATATTTEAVQASVGPRLTVGSAAELEDAEMLGVDGSGRLCLKIAPPIKRTRVVPEPWRTNVLIRMWRRMTGRTNAPQPPKRELPPARWRTVGSIRRYILLTLMIGQTLVAGWYMKGILPYQGWSFVDLDEVVNQPLWDTVVQVWPYALQTSILILFGILFCWVSAGFWTALMGFLELLTGRDKYRISGSSAGSEPIAPEARTALVMPICNEDVPRVFAGLRATFESVAASGNLDRFDFFVLSDTNDTDIAVAEQQAWLDVCRETKGFGRIFYRRRRRRVKRKSGNLDDFCRRWGGEYKYMVVLDADSVMSGECLSSLVRLMEANPDAGIIQTAPKASGMDTLYARMQQFATRVYGPLFTAGLHFWQLGESHYWGHNAIIRMKPFIEHCALAPLPGKGAFAGAILSHDFVEAALMRRAGWGVWIAYDLPGSYEELPPNLLDELKRDRRWCHGNLMNFRLFLVKGMHPVHRAVFLTGVMSYLSAPLWFFFLVLSTALLATNTLMEPQYFIEPYQLYPLWPQWHPEKAVALFSTTIVLLFLPKLLSIILIWAKGAVEFGGRIKVTLSMLMEMLFSMLLAPVRMIFHTRFVLAAFLGWAATWNSPQRDDDSTPWSEAVRRHGPQTLLGIAWAALVAWLNPSFLWWLAPIVGSLVLSIPVSVISSRTRLGLAAKDEKLFLIPEEYATPQELLATDQYTHENRWHALHDGFVRAVVDPRQNALACAMATARHGQAAPIEAMRAERLAKAIEVGPKGLDLGTRLALLSDPVALARLHAQVWAEHNAAWIDVWRASINNDPHSPLLPLHPANEAQPSLVGA</sequence>
<accession>B1J2R4</accession>
<name>OPGH_PSEPW</name>
<comment type="function">
    <text evidence="1">Involved in the biosynthesis of osmoregulated periplasmic glucans (OPGs).</text>
</comment>
<comment type="pathway">
    <text evidence="1">Glycan metabolism; osmoregulated periplasmic glucan (OPG) biosynthesis.</text>
</comment>
<comment type="subcellular location">
    <subcellularLocation>
        <location evidence="1">Cell inner membrane</location>
        <topology evidence="1">Multi-pass membrane protein</topology>
    </subcellularLocation>
</comment>
<comment type="similarity">
    <text evidence="1">Belongs to the glycosyltransferase 2 family. OpgH subfamily.</text>
</comment>
<protein>
    <recommendedName>
        <fullName evidence="1">Glucans biosynthesis glucosyltransferase H</fullName>
        <ecNumber evidence="1">2.4.1.-</ecNumber>
    </recommendedName>
</protein>
<reference key="1">
    <citation type="submission" date="2008-02" db="EMBL/GenBank/DDBJ databases">
        <title>Complete sequence of Pseudomonas putida W619.</title>
        <authorList>
            <person name="Copeland A."/>
            <person name="Lucas S."/>
            <person name="Lapidus A."/>
            <person name="Barry K."/>
            <person name="Detter J.C."/>
            <person name="Glavina del Rio T."/>
            <person name="Dalin E."/>
            <person name="Tice H."/>
            <person name="Pitluck S."/>
            <person name="Chain P."/>
            <person name="Malfatti S."/>
            <person name="Shin M."/>
            <person name="Vergez L."/>
            <person name="Schmutz J."/>
            <person name="Larimer F."/>
            <person name="Land M."/>
            <person name="Hauser L."/>
            <person name="Kyrpides N."/>
            <person name="Kim E."/>
            <person name="Taghavi S."/>
            <person name="Vangronsveld D."/>
            <person name="van der Lelie D."/>
            <person name="Richardson P."/>
        </authorList>
    </citation>
    <scope>NUCLEOTIDE SEQUENCE [LARGE SCALE GENOMIC DNA]</scope>
    <source>
        <strain>W619</strain>
    </source>
</reference>
<evidence type="ECO:0000255" key="1">
    <source>
        <dbReference type="HAMAP-Rule" id="MF_01072"/>
    </source>
</evidence>
<feature type="chain" id="PRO_1000136658" description="Glucans biosynthesis glucosyltransferase H">
    <location>
        <begin position="1"/>
        <end position="857"/>
    </location>
</feature>
<feature type="transmembrane region" description="Helical" evidence="1">
    <location>
        <begin position="142"/>
        <end position="162"/>
    </location>
</feature>
<feature type="transmembrane region" description="Helical" evidence="1">
    <location>
        <begin position="196"/>
        <end position="216"/>
    </location>
</feature>
<feature type="transmembrane region" description="Helical" evidence="1">
    <location>
        <begin position="515"/>
        <end position="535"/>
    </location>
</feature>
<feature type="transmembrane region" description="Helical" evidence="1">
    <location>
        <begin position="572"/>
        <end position="592"/>
    </location>
</feature>
<feature type="transmembrane region" description="Helical" evidence="1">
    <location>
        <begin position="606"/>
        <end position="626"/>
    </location>
</feature>
<feature type="transmembrane region" description="Helical" evidence="1">
    <location>
        <begin position="682"/>
        <end position="702"/>
    </location>
</feature>
<keyword id="KW-0997">Cell inner membrane</keyword>
<keyword id="KW-1003">Cell membrane</keyword>
<keyword id="KW-0328">Glycosyltransferase</keyword>
<keyword id="KW-0472">Membrane</keyword>
<keyword id="KW-0808">Transferase</keyword>
<keyword id="KW-0812">Transmembrane</keyword>
<keyword id="KW-1133">Transmembrane helix</keyword>
<proteinExistence type="inferred from homology"/>
<gene>
    <name evidence="1" type="primary">opgH</name>
    <name type="ordered locus">PputW619_0440</name>
</gene>
<dbReference type="EC" id="2.4.1.-" evidence="1"/>
<dbReference type="EMBL" id="CP000949">
    <property type="protein sequence ID" value="ACA70945.1"/>
    <property type="molecule type" value="Genomic_DNA"/>
</dbReference>
<dbReference type="STRING" id="390235.PputW619_0440"/>
<dbReference type="CAZy" id="GT2">
    <property type="family name" value="Glycosyltransferase Family 2"/>
</dbReference>
<dbReference type="KEGG" id="ppw:PputW619_0440"/>
<dbReference type="eggNOG" id="COG2943">
    <property type="taxonomic scope" value="Bacteria"/>
</dbReference>
<dbReference type="HOGENOM" id="CLU_015730_1_0_6"/>
<dbReference type="OrthoDB" id="9775281at2"/>
<dbReference type="UniPathway" id="UPA00637"/>
<dbReference type="GO" id="GO:0005886">
    <property type="term" value="C:plasma membrane"/>
    <property type="evidence" value="ECO:0007669"/>
    <property type="project" value="UniProtKB-SubCell"/>
</dbReference>
<dbReference type="GO" id="GO:0016758">
    <property type="term" value="F:hexosyltransferase activity"/>
    <property type="evidence" value="ECO:0007669"/>
    <property type="project" value="UniProtKB-UniRule"/>
</dbReference>
<dbReference type="GO" id="GO:0009250">
    <property type="term" value="P:glucan biosynthetic process"/>
    <property type="evidence" value="ECO:0007669"/>
    <property type="project" value="UniProtKB-UniRule"/>
</dbReference>
<dbReference type="CDD" id="cd04191">
    <property type="entry name" value="Glucan_BSP_MdoH"/>
    <property type="match status" value="1"/>
</dbReference>
<dbReference type="FunFam" id="3.90.550.10:FF:000047">
    <property type="entry name" value="Glucans biosynthesis glucosyltransferase H"/>
    <property type="match status" value="1"/>
</dbReference>
<dbReference type="Gene3D" id="3.90.550.10">
    <property type="entry name" value="Spore Coat Polysaccharide Biosynthesis Protein SpsA, Chain A"/>
    <property type="match status" value="1"/>
</dbReference>
<dbReference type="HAMAP" id="MF_01072">
    <property type="entry name" value="MdoH_OpgH"/>
    <property type="match status" value="1"/>
</dbReference>
<dbReference type="InterPro" id="IPR023725">
    <property type="entry name" value="Glucans_biosynth_gluTrFase_H"/>
</dbReference>
<dbReference type="InterPro" id="IPR001173">
    <property type="entry name" value="Glyco_trans_2-like"/>
</dbReference>
<dbReference type="InterPro" id="IPR050321">
    <property type="entry name" value="Glycosyltr_2/OpgH_subfam"/>
</dbReference>
<dbReference type="InterPro" id="IPR029044">
    <property type="entry name" value="Nucleotide-diphossugar_trans"/>
</dbReference>
<dbReference type="NCBIfam" id="NF003955">
    <property type="entry name" value="PRK05454.1-1"/>
    <property type="match status" value="1"/>
</dbReference>
<dbReference type="NCBIfam" id="NF003958">
    <property type="entry name" value="PRK05454.2-1"/>
    <property type="match status" value="1"/>
</dbReference>
<dbReference type="NCBIfam" id="NF003962">
    <property type="entry name" value="PRK05454.2-5"/>
    <property type="match status" value="1"/>
</dbReference>
<dbReference type="PANTHER" id="PTHR43867">
    <property type="entry name" value="CELLULOSE SYNTHASE CATALYTIC SUBUNIT A [UDP-FORMING]"/>
    <property type="match status" value="1"/>
</dbReference>
<dbReference type="PANTHER" id="PTHR43867:SF5">
    <property type="entry name" value="GLUCANS BIOSYNTHESIS GLUCOSYLTRANSFERASE H"/>
    <property type="match status" value="1"/>
</dbReference>
<dbReference type="Pfam" id="PF00535">
    <property type="entry name" value="Glycos_transf_2"/>
    <property type="match status" value="1"/>
</dbReference>
<dbReference type="SUPFAM" id="SSF53448">
    <property type="entry name" value="Nucleotide-diphospho-sugar transferases"/>
    <property type="match status" value="1"/>
</dbReference>
<organism>
    <name type="scientific">Pseudomonas putida (strain W619)</name>
    <dbReference type="NCBI Taxonomy" id="390235"/>
    <lineage>
        <taxon>Bacteria</taxon>
        <taxon>Pseudomonadati</taxon>
        <taxon>Pseudomonadota</taxon>
        <taxon>Gammaproteobacteria</taxon>
        <taxon>Pseudomonadales</taxon>
        <taxon>Pseudomonadaceae</taxon>
        <taxon>Pseudomonas</taxon>
    </lineage>
</organism>